<sequence>MGDMANNSVAYSGVKNSLKEANHDGDFGITLAELRALMELRSTDALRKIQESYGDVYGICTKLKTSPNEGLSGNPADLERREAVFGKNFIPPKKPKTFLQLVWEALQDVTLIILEIAAIVSLGLSFYQPPEGDNALCGEVSVGEEEGEGETGWIEGAAILLSVVCVVLVTAFNDWSKEKQFRGLQSRIEQEQKFTVIRGGQVIQIPVADITVGDIAQVKYGDLLPADGILIQGNDLKIDESSLTGESDHVKKSLDKDPLLLSGTHVMEGSGRMVVTAVGVNSQTGIIFTLLGAGGEEEEKKDEKKKEKKNKKQDGAIENRNKAKAQDGAAMEMQPLKSEEGGDGDEKDKKKANLPKKEKSVLQGKLTKLAVQIGKAGLLMSAITVIILVLYFVIDTFWVQKRPWLAECTPIYIQYFVKFFIIGVTVLVVAVPEGLPLAVTISLAYSVKKMMKDNNLVRHLDACETMGNATAICSDKTGTLTMNRMTVVQAYINEKHYKKVPEPEAIPPNILSYLVTGISVNCAYTSKILPPEKEGGLPRHVGNKTECALLGFLLDLKRDYQDVRNEIPEEALYKVYTFNSVRKSMSTVLKNSDGSFRIFSKGASEIILKKCFKILSANGEAKVFRPRDRDDIVKTVIEPMASEGLRTICLAFRDFPAGEPEPEWDNENDVVTGLTCIAVVGIEDPVRPEVPEAIKKCQRAGITVRMVTGDNINTARAIATKCGILHPGEDFLCLEGKDFNRRIRNEKGEIEQERIDKIWPKLRVLARSSPTDKHTLVKGIIDSTVSEQRQVVAVTGDGTNDGPALKKADVGFAMGIAGTDVAKEASDIILTDDNFTSIVKAVMWGRNVYDSISKFLQFQLTVNVVAVIVAFTGACITQDSPLKAVQMLWVNLIMDTLASLALATEPPTESLLLRKPYGRNKPLISRTMMKNILGHAFYQLVVVFTLLFAGEKFFDIDSGRNAPLHAPPSEHYTIVFNTFVLMQLFNEINARKIHGERNVFEGIFNNAIFCTIVLGTFVVQIIIVQFGGKPFSCSELSIEQWLWSIFLGMGTLLWGQLISTIPTSRLKFLKEAGHGTQKEEIPEEELAEDVEEIDHAERELRRGQILWFRGLNRIQTQIRVVNAFRSSLYEGLEKPESRSSIHNFMTHPEFRIEDSEPLIPLIDDTDAEDDAPTKRNSSPPPSPNKNNNAVDSGIHLTIEMNKSATSSSPGSPLHSLETSL</sequence>
<comment type="function">
    <text evidence="2 3">Catalyzes the hydrolysis of ATP coupled with the transport of calcium from the cytoplasm to the extracellular space thereby maintaining intracellular calcium homeostasis. Plays a role in blood pressure regulation through regulation of intracellular calcium concentration and nitric oxide production leading to regulation of vascular smooth muscle cells vasoconstriction. Positively regulates bone mineralization through absorption of calcium from the intestine. Plays dual roles in osteoclast differentiation and survival by regulating RANKL-induced calcium oscillations in preosteoclasts and mediating calcium extrusion in mature osteoclasts (By similarity). Regulates insulin sensitivity through calcium/calmodulin signaling pathway by regulating AKT1 activation and NOS3 activation in endothelial cells (By similarity). May play a role in synaptic transmission by modulating calcium and proton dynamics at the synaptic vesicles.</text>
</comment>
<comment type="catalytic activity">
    <reaction evidence="2">
        <text>Ca(2+)(in) + ATP + H2O = Ca(2+)(out) + ADP + phosphate + H(+)</text>
        <dbReference type="Rhea" id="RHEA:18105"/>
        <dbReference type="ChEBI" id="CHEBI:15377"/>
        <dbReference type="ChEBI" id="CHEBI:15378"/>
        <dbReference type="ChEBI" id="CHEBI:29108"/>
        <dbReference type="ChEBI" id="CHEBI:30616"/>
        <dbReference type="ChEBI" id="CHEBI:43474"/>
        <dbReference type="ChEBI" id="CHEBI:456216"/>
        <dbReference type="EC" id="7.2.2.10"/>
    </reaction>
    <physiologicalReaction direction="left-to-right" evidence="2">
        <dbReference type="Rhea" id="RHEA:18106"/>
    </physiologicalReaction>
</comment>
<comment type="subunit">
    <text evidence="2 3">Monomer. Dimer. Oligomer. Calmodulin binding. Interacts with PDZD11. Interacts with SLC35G1 and STIM1. Interacts with YWHAE; interacts with the monomeric and dimeric forms of the YWHAE but prefer the monomer form; this interaction inhibits calcium-transporting ATPase activity (By similarity). Interacts with NPTN; this interaction stabilizes ATP2B1 and increases ATPase activity; this interaction controls T cell calcium homeostasis following T cell activation. Interacts with EPB41; regulates small intestinal calcium absorption through regulation of membrane expression of ATP2B1 (By similarity).</text>
</comment>
<comment type="subcellular location">
    <subcellularLocation>
        <location evidence="3">Cell membrane</location>
        <topology evidence="5">Multi-pass membrane protein</topology>
    </subcellularLocation>
    <subcellularLocation>
        <location evidence="7">Basolateral cell membrane</location>
    </subcellularLocation>
    <subcellularLocation>
        <location evidence="2">Synapse</location>
    </subcellularLocation>
    <subcellularLocation>
        <location evidence="2">Presynaptic cell membrane</location>
        <topology evidence="5">Multi-pass membrane protein</topology>
    </subcellularLocation>
    <subcellularLocation>
        <location evidence="2">Cytoplasmic vesicle</location>
        <location evidence="2">Secretory vesicle</location>
        <location evidence="2">Synaptic vesicle membrane</location>
        <topology evidence="5">Multi-pass membrane protein</topology>
    </subcellularLocation>
    <text evidence="2">Colocalizes with SV2A in photoreceptor synaptic terminals. Colocalizes with NPTN to the immunological synapse. Colocalizes with EPB41 to the basolateral membrane in enterocyte. Preferentially sorted to recycling synaptic vesicles.</text>
</comment>
<comment type="alternative products">
    <event type="alternative splicing"/>
    <isoform>
        <id>P11505-3</id>
        <name>B</name>
        <name>CI</name>
        <sequence type="displayed"/>
    </isoform>
    <isoform>
        <id>P11505-1</id>
        <name>D</name>
        <name>CIV</name>
        <sequence type="described" ref="VSP_059782"/>
    </isoform>
    <isoform>
        <id>P11505-2</id>
        <name>A</name>
        <name>CII</name>
        <sequence type="described" ref="VSP_059783 VSP_059784"/>
    </isoform>
    <isoform>
        <id>P11505-4</id>
        <name>C</name>
        <name>CIII</name>
        <sequence type="described" ref="VSP_059781"/>
    </isoform>
    <isoform>
        <id>P11505-5</id>
        <name>E</name>
        <name>CV</name>
        <sequence type="described" ref="VSP_059783 VSP_059785"/>
    </isoform>
    <isoform>
        <id>P11505-6</id>
        <name>K</name>
        <sequence type="described" ref="VSP_059780"/>
    </isoform>
</comment>
<comment type="tissue specificity">
    <text evidence="7">Isoform B is ubiquitously expressed. Isoforms A and E have only been found in brain cortex. Isoform C is found in brain cortex, skeletal muscle and heart muscle. Isoform D has only been found in fetal skeletal muscle. Isoform K has been found in small intestine and liver. Isoform B is expressed in hair cells of inner ear (PubMed:16803870).</text>
</comment>
<comment type="domain">
    <text evidence="3">Isoforms A, C, D and E contain and additional calmodulin-binding subdomain B which is different in the different splice variants and shows pH dependent calmodulin binding properties.</text>
</comment>
<comment type="similarity">
    <text evidence="9">Belongs to the cation transport ATPase (P-type) (TC 3.A.3) family. Type IIB subfamily.</text>
</comment>
<comment type="sequence caution" evidence="9">
    <conflict type="frameshift">
        <sequence resource="EMBL-CDS" id="AAA50878"/>
    </conflict>
</comment>
<organism>
    <name type="scientific">Rattus norvegicus</name>
    <name type="common">Rat</name>
    <dbReference type="NCBI Taxonomy" id="10116"/>
    <lineage>
        <taxon>Eukaryota</taxon>
        <taxon>Metazoa</taxon>
        <taxon>Chordata</taxon>
        <taxon>Craniata</taxon>
        <taxon>Vertebrata</taxon>
        <taxon>Euteleostomi</taxon>
        <taxon>Mammalia</taxon>
        <taxon>Eutheria</taxon>
        <taxon>Euarchontoglires</taxon>
        <taxon>Glires</taxon>
        <taxon>Rodentia</taxon>
        <taxon>Myomorpha</taxon>
        <taxon>Muroidea</taxon>
        <taxon>Muridae</taxon>
        <taxon>Murinae</taxon>
        <taxon>Rattus</taxon>
    </lineage>
</organism>
<proteinExistence type="evidence at protein level"/>
<feature type="initiator methionine" description="Removed" evidence="3">
    <location>
        <position position="1"/>
    </location>
</feature>
<feature type="chain" id="PRO_0000046212" description="Plasma membrane calcium-transporting ATPase 1">
    <location>
        <begin position="2"/>
        <end position="1220"/>
    </location>
</feature>
<feature type="topological domain" description="Cytoplasmic" evidence="9">
    <location>
        <begin position="2"/>
        <end position="105"/>
    </location>
</feature>
<feature type="transmembrane region" description="Helical" evidence="3">
    <location>
        <begin position="106"/>
        <end position="126"/>
    </location>
</feature>
<feature type="topological domain" description="Extracellular" evidence="9">
    <location>
        <begin position="127"/>
        <end position="154"/>
    </location>
</feature>
<feature type="transmembrane region" description="Helical" evidence="3">
    <location>
        <begin position="155"/>
        <end position="175"/>
    </location>
</feature>
<feature type="topological domain" description="Cytoplasmic" evidence="9">
    <location>
        <begin position="176"/>
        <end position="366"/>
    </location>
</feature>
<feature type="transmembrane region" description="Helical" evidence="3">
    <location>
        <begin position="367"/>
        <end position="386"/>
    </location>
</feature>
<feature type="topological domain" description="Extracellular" evidence="9">
    <location>
        <begin position="387"/>
        <end position="418"/>
    </location>
</feature>
<feature type="transmembrane region" description="Helical" evidence="5">
    <location>
        <begin position="419"/>
        <end position="439"/>
    </location>
</feature>
<feature type="topological domain" description="Cytoplasmic" evidence="9">
    <location>
        <begin position="440"/>
        <end position="855"/>
    </location>
</feature>
<feature type="transmembrane region" description="Helical" evidence="5">
    <location>
        <begin position="856"/>
        <end position="876"/>
    </location>
</feature>
<feature type="topological domain" description="Extracellular" evidence="9">
    <location>
        <begin position="877"/>
        <end position="882"/>
    </location>
</feature>
<feature type="transmembrane region" description="Helical" evidence="5">
    <location>
        <begin position="883"/>
        <end position="903"/>
    </location>
</feature>
<feature type="topological domain" description="Cytoplasmic" evidence="9">
    <location>
        <begin position="904"/>
        <end position="927"/>
    </location>
</feature>
<feature type="transmembrane region" description="Helical" evidence="3">
    <location>
        <begin position="928"/>
        <end position="948"/>
    </location>
</feature>
<feature type="topological domain" description="Extracellular" evidence="9">
    <location>
        <begin position="949"/>
        <end position="971"/>
    </location>
</feature>
<feature type="transmembrane region" description="Helical" evidence="3">
    <location>
        <begin position="972"/>
        <end position="991"/>
    </location>
</feature>
<feature type="topological domain" description="Cytoplasmic" evidence="9">
    <location>
        <begin position="992"/>
        <end position="1005"/>
    </location>
</feature>
<feature type="transmembrane region" description="Helical" evidence="3">
    <location>
        <begin position="1006"/>
        <end position="1027"/>
    </location>
</feature>
<feature type="topological domain" description="Extracellular" evidence="9">
    <location>
        <begin position="1028"/>
        <end position="1039"/>
    </location>
</feature>
<feature type="transmembrane region" description="Helical" evidence="3">
    <location>
        <begin position="1040"/>
        <end position="1060"/>
    </location>
</feature>
<feature type="topological domain" description="Cytoplasmic" evidence="9">
    <location>
        <begin position="1061"/>
        <end position="1220"/>
    </location>
</feature>
<feature type="region of interest" description="Disordered" evidence="6">
    <location>
        <begin position="297"/>
        <end position="356"/>
    </location>
</feature>
<feature type="region of interest" description="Calmodulin-binding subdomain A" evidence="1">
    <location>
        <begin position="1100"/>
        <end position="1117"/>
    </location>
</feature>
<feature type="region of interest" description="Required for basolateral membrane targeting" evidence="7">
    <location>
        <begin position="1118"/>
        <end position="1220"/>
    </location>
</feature>
<feature type="region of interest" description="Disordered" evidence="6">
    <location>
        <begin position="1162"/>
        <end position="1220"/>
    </location>
</feature>
<feature type="compositionally biased region" description="Basic and acidic residues" evidence="6">
    <location>
        <begin position="312"/>
        <end position="325"/>
    </location>
</feature>
<feature type="compositionally biased region" description="Basic and acidic residues" evidence="6">
    <location>
        <begin position="337"/>
        <end position="356"/>
    </location>
</feature>
<feature type="compositionally biased region" description="Polar residues" evidence="6">
    <location>
        <begin position="1200"/>
        <end position="1220"/>
    </location>
</feature>
<feature type="active site" description="4-aspartylphosphate intermediate" evidence="4">
    <location>
        <position position="475"/>
    </location>
</feature>
<feature type="binding site" evidence="4">
    <location>
        <position position="475"/>
    </location>
    <ligand>
        <name>Mg(2+)</name>
        <dbReference type="ChEBI" id="CHEBI:18420"/>
    </ligand>
</feature>
<feature type="binding site" evidence="4">
    <location>
        <position position="477"/>
    </location>
    <ligand>
        <name>Mg(2+)</name>
        <dbReference type="ChEBI" id="CHEBI:18420"/>
    </ligand>
</feature>
<feature type="binding site" evidence="4">
    <location>
        <position position="797"/>
    </location>
    <ligand>
        <name>Mg(2+)</name>
        <dbReference type="ChEBI" id="CHEBI:18420"/>
    </ligand>
</feature>
<feature type="modified residue" description="N-acetylglycine" evidence="3">
    <location>
        <position position="2"/>
    </location>
</feature>
<feature type="modified residue" description="Phosphoserine" evidence="3">
    <location>
        <position position="8"/>
    </location>
</feature>
<feature type="modified residue" description="Phosphoserine" evidence="11">
    <location>
        <position position="17"/>
    </location>
</feature>
<feature type="modified residue" description="Phosphoserine" evidence="2">
    <location>
        <position position="338"/>
    </location>
</feature>
<feature type="modified residue" description="Phosphothreonine; by PKC" evidence="3">
    <location>
        <position position="1116"/>
    </location>
</feature>
<feature type="modified residue" description="Phosphoserine" evidence="11">
    <location>
        <position position="1140"/>
    </location>
</feature>
<feature type="modified residue" description="Phosphoserine" evidence="3">
    <location>
        <position position="1155"/>
    </location>
</feature>
<feature type="modified residue" description="Phosphothreonine" evidence="3">
    <location>
        <position position="1165"/>
    </location>
</feature>
<feature type="modified residue" description="Phosphoserine; by PKA" evidence="1">
    <location>
        <position position="1177"/>
    </location>
</feature>
<feature type="modified residue" description="Phosphoserine" evidence="3">
    <location>
        <position position="1178"/>
    </location>
</feature>
<feature type="modified residue" description="Phosphoserine" evidence="3">
    <location>
        <position position="1182"/>
    </location>
</feature>
<feature type="splice variant" id="VSP_059780" description="In isoform K.">
    <location>
        <begin position="1021"/>
        <end position="1056"/>
    </location>
</feature>
<feature type="splice variant" id="VSP_059781" description="In isoform C.">
    <original>Q</original>
    <variation>QMDVVNAFQSGGSIQGALRRQPSIASQHHD</variation>
    <location>
        <position position="1117"/>
    </location>
</feature>
<feature type="splice variant" id="VSP_059782" description="In isoform D.">
    <original>Q</original>
    <variation>QMDVVNAFQSGGSIQGALRRQPSIASQHHDVTNVSTPTH</variation>
    <location>
        <position position="1117"/>
    </location>
</feature>
<feature type="splice variant" id="VSP_059783" description="In isoform A and isoform E.">
    <original>IR</original>
    <variation>MD</variation>
    <location>
        <begin position="1118"/>
        <end position="1119"/>
    </location>
</feature>
<feature type="splice variant" id="VSP_059784" description="In isoform A.">
    <original>RSSLYEGLEKPESRSSIHNFMTHPEFRIEDSEPLIPLIDDTDAEDDAPTKRNSSPPPSPNKNNNAVDSGIHLTIEMNKSATSSSPGSPLHSLETSL</original>
    <variation>QSGGSIQGALRRQPSIASQHHDVTNVSTPTHVVFSSSTASTPVGYPSGECIS</variation>
    <location>
        <begin position="1125"/>
        <end position="1220"/>
    </location>
</feature>
<feature type="splice variant" id="VSP_059785" description="In isoform E.">
    <original>RSSLYEGLEKPESRSSIHNFMTHPEFRIEDSEPLIPLIDDTDAEDDAPTKRNSSPPPSPNKNNNAVDSGIHLTIEMNKSATSSSPGSPLHSLETSL</original>
    <variation>QSGGSIQGALRRQPSIASQHHDVTNVSTPTHVVFSSSTASTPVGSEW</variation>
    <location>
        <begin position="1125"/>
        <end position="1220"/>
    </location>
</feature>
<feature type="sequence conflict" description="In Ref. 2; AAD46085." evidence="9" ref="2">
    <original>Q</original>
    <variation>R</variation>
    <location sequence="P11505-1">
        <position position="1125"/>
    </location>
</feature>
<protein>
    <recommendedName>
        <fullName evidence="9">Plasma membrane calcium-transporting ATPase 1</fullName>
        <ecNumber evidence="2">7.2.2.10</ecNumber>
    </recommendedName>
    <alternativeName>
        <fullName evidence="8">Plasma membrane calcium ATPase isoform 1</fullName>
        <shortName evidence="8">PMCA1</shortName>
    </alternativeName>
    <alternativeName>
        <fullName>Plasma membrane calcium pump isoform 1</fullName>
    </alternativeName>
</protein>
<accession>P11505</accession>
<accession>Q63442</accession>
<accession>Q9R1L7</accession>
<keyword id="KW-0007">Acetylation</keyword>
<keyword id="KW-0025">Alternative splicing</keyword>
<keyword id="KW-0067">ATP-binding</keyword>
<keyword id="KW-0106">Calcium</keyword>
<keyword id="KW-0109">Calcium transport</keyword>
<keyword id="KW-0112">Calmodulin-binding</keyword>
<keyword id="KW-1003">Cell membrane</keyword>
<keyword id="KW-0966">Cell projection</keyword>
<keyword id="KW-0968">Cytoplasmic vesicle</keyword>
<keyword id="KW-0406">Ion transport</keyword>
<keyword id="KW-0460">Magnesium</keyword>
<keyword id="KW-0472">Membrane</keyword>
<keyword id="KW-0479">Metal-binding</keyword>
<keyword id="KW-0547">Nucleotide-binding</keyword>
<keyword id="KW-0597">Phosphoprotein</keyword>
<keyword id="KW-1185">Reference proteome</keyword>
<keyword id="KW-0770">Synapse</keyword>
<keyword id="KW-1278">Translocase</keyword>
<keyword id="KW-0812">Transmembrane</keyword>
<keyword id="KW-1133">Transmembrane helix</keyword>
<keyword id="KW-0813">Transport</keyword>
<reference key="1">
    <citation type="journal article" date="1988" name="J. Biol. Chem.">
        <title>Molecular cloning of two isoforms of the plasma membrane Ca2+-transporting ATPase from rat brain. Structural and functional domains exhibit similarity to Na+,K+- and other cation transport ATPases.</title>
        <authorList>
            <person name="Shull G.E."/>
            <person name="Greeb J."/>
        </authorList>
    </citation>
    <scope>NUCLEOTIDE SEQUENCE [MRNA] (ISOFORM A)</scope>
</reference>
<reference key="2">
    <citation type="journal article" date="2000" name="Cell Calcium">
        <title>Expression of multiple plasma membrane Ca(2+)-ATPases in rat pancreatic islet cells.</title>
        <authorList>
            <person name="Kamagate A."/>
            <person name="Herchuelz A."/>
            <person name="Bollen A."/>
            <person name="Van Eylen F."/>
        </authorList>
    </citation>
    <scope>NUCLEOTIDE SEQUENCE [MRNA] OF 926-1164 (ISOFORM K)</scope>
    <source>
        <tissue>Pancreatic islet</tissue>
    </source>
</reference>
<reference key="3">
    <citation type="journal article" date="1993" name="J. Biol. Chem.">
        <title>Alternative splicing of exons encoding the calmodulin-binding domains and C termini of plasma membrane Ca(2+)-ATPase isoforms 1, 2, 3, and 4.</title>
        <authorList>
            <person name="Keeton T.P."/>
            <person name="Burk S.E."/>
            <person name="Shull G.E."/>
        </authorList>
    </citation>
    <scope>NUCLEOTIDE SEQUENCE [GENOMIC DNA] OF 1057-1220</scope>
    <scope>ALTERNATIVE SPLICING (ISOFORMS A; B; C; D AND E)</scope>
    <source>
        <strain>Sprague-Dawley</strain>
    </source>
</reference>
<reference key="4">
    <citation type="journal article" date="2006" name="J. Cell Sci.">
        <title>Molecular determinants for differential membrane trafficking of PMCA1 and PMCA2 in mammalian hair cells.</title>
        <authorList>
            <person name="Grati M."/>
            <person name="Aggarwal N."/>
            <person name="Strehler E.E."/>
            <person name="Wenthold R.J."/>
        </authorList>
    </citation>
    <scope>SUBCELLULAR LOCATION</scope>
    <scope>TISSUE SPECIFICITY</scope>
    <scope>REGION</scope>
</reference>
<reference key="5">
    <citation type="journal article" date="2012" name="Nat. Commun.">
        <title>Quantitative maps of protein phosphorylation sites across 14 different rat organs and tissues.</title>
        <authorList>
            <person name="Lundby A."/>
            <person name="Secher A."/>
            <person name="Lage K."/>
            <person name="Nordsborg N.B."/>
            <person name="Dmytriyev A."/>
            <person name="Lundby C."/>
            <person name="Olsen J.V."/>
        </authorList>
    </citation>
    <scope>PHOSPHORYLATION [LARGE SCALE ANALYSIS] AT SER-17 AND SER-1140</scope>
    <scope>IDENTIFICATION BY MASS SPECTROMETRY [LARGE SCALE ANALYSIS]</scope>
</reference>
<evidence type="ECO:0000250" key="1"/>
<evidence type="ECO:0000250" key="2">
    <source>
        <dbReference type="UniProtKB" id="G5E829"/>
    </source>
</evidence>
<evidence type="ECO:0000250" key="3">
    <source>
        <dbReference type="UniProtKB" id="P20020"/>
    </source>
</evidence>
<evidence type="ECO:0000250" key="4">
    <source>
        <dbReference type="UniProtKB" id="Q5ZWR1"/>
    </source>
</evidence>
<evidence type="ECO:0000255" key="5"/>
<evidence type="ECO:0000256" key="6">
    <source>
        <dbReference type="SAM" id="MobiDB-lite"/>
    </source>
</evidence>
<evidence type="ECO:0000269" key="7">
    <source>
    </source>
</evidence>
<evidence type="ECO:0000303" key="8">
    <source>
    </source>
</evidence>
<evidence type="ECO:0000305" key="9"/>
<evidence type="ECO:0000312" key="10">
    <source>
        <dbReference type="RGD" id="621303"/>
    </source>
</evidence>
<evidence type="ECO:0007744" key="11">
    <source>
    </source>
</evidence>
<name>AT2B1_RAT</name>
<dbReference type="EC" id="7.2.2.10" evidence="2"/>
<dbReference type="EMBL" id="J03753">
    <property type="protein sequence ID" value="AAA73898.1"/>
    <property type="molecule type" value="mRNA"/>
</dbReference>
<dbReference type="EMBL" id="L04739">
    <property type="protein sequence ID" value="AAA50878.1"/>
    <property type="status" value="ALT_SEQ"/>
    <property type="molecule type" value="Genomic_DNA"/>
</dbReference>
<dbReference type="EMBL" id="AF076783">
    <property type="protein sequence ID" value="AAD46085.1"/>
    <property type="molecule type" value="mRNA"/>
</dbReference>
<dbReference type="PIR" id="A28065">
    <property type="entry name" value="A28065"/>
</dbReference>
<dbReference type="PIR" id="D45213">
    <property type="entry name" value="D45213"/>
</dbReference>
<dbReference type="RefSeq" id="NP_445763.1">
    <molecule id="P11505-2"/>
    <property type="nucleotide sequence ID" value="NM_053311.3"/>
</dbReference>
<dbReference type="RefSeq" id="XP_063119194.1">
    <molecule id="P11505-2"/>
    <property type="nucleotide sequence ID" value="XM_063263124.1"/>
</dbReference>
<dbReference type="RefSeq" id="XP_063119195.1">
    <molecule id="P11505-5"/>
    <property type="nucleotide sequence ID" value="XM_063263125.1"/>
</dbReference>
<dbReference type="SMR" id="P11505"/>
<dbReference type="BioGRID" id="248230">
    <property type="interactions" value="6"/>
</dbReference>
<dbReference type="FunCoup" id="P11505">
    <property type="interactions" value="3570"/>
</dbReference>
<dbReference type="IntAct" id="P11505">
    <property type="interactions" value="2"/>
</dbReference>
<dbReference type="MINT" id="P11505"/>
<dbReference type="STRING" id="10116.ENSRNOP00000040092"/>
<dbReference type="iPTMnet" id="P11505"/>
<dbReference type="PhosphoSitePlus" id="P11505"/>
<dbReference type="SwissPalm" id="P11505"/>
<dbReference type="jPOST" id="P11505"/>
<dbReference type="PaxDb" id="10116-ENSRNOP00000005491"/>
<dbReference type="GeneID" id="29598"/>
<dbReference type="KEGG" id="rno:29598"/>
<dbReference type="UCSC" id="RGD:621303">
    <molecule id="P11505-3"/>
    <property type="organism name" value="rat"/>
</dbReference>
<dbReference type="AGR" id="RGD:621303"/>
<dbReference type="CTD" id="490"/>
<dbReference type="RGD" id="621303">
    <property type="gene designation" value="Atp2b1"/>
</dbReference>
<dbReference type="VEuPathDB" id="HostDB:ENSRNOG00000004026"/>
<dbReference type="eggNOG" id="KOG0204">
    <property type="taxonomic scope" value="Eukaryota"/>
</dbReference>
<dbReference type="HOGENOM" id="CLU_002360_9_0_1"/>
<dbReference type="InParanoid" id="P11505"/>
<dbReference type="PhylomeDB" id="P11505"/>
<dbReference type="Reactome" id="R-RNO-418359">
    <property type="pathway name" value="Reduction of cytosolic Ca++ levels"/>
</dbReference>
<dbReference type="Reactome" id="R-RNO-5578775">
    <property type="pathway name" value="Ion homeostasis"/>
</dbReference>
<dbReference type="Reactome" id="R-RNO-936837">
    <property type="pathway name" value="Ion transport by P-type ATPases"/>
</dbReference>
<dbReference type="PRO" id="PR:P11505"/>
<dbReference type="Proteomes" id="UP000002494">
    <property type="component" value="Chromosome 7"/>
</dbReference>
<dbReference type="Bgee" id="ENSRNOG00000004026">
    <property type="expression patterns" value="Expressed in Ammon's horn and 19 other cell types or tissues"/>
</dbReference>
<dbReference type="GO" id="GO:0045177">
    <property type="term" value="C:apical part of cell"/>
    <property type="evidence" value="ECO:0000314"/>
    <property type="project" value="RGD"/>
</dbReference>
<dbReference type="GO" id="GO:0016324">
    <property type="term" value="C:apical plasma membrane"/>
    <property type="evidence" value="ECO:0000314"/>
    <property type="project" value="RGD"/>
</dbReference>
<dbReference type="GO" id="GO:0016323">
    <property type="term" value="C:basolateral plasma membrane"/>
    <property type="evidence" value="ECO:0000314"/>
    <property type="project" value="RGD"/>
</dbReference>
<dbReference type="GO" id="GO:0009898">
    <property type="term" value="C:cytoplasmic side of plasma membrane"/>
    <property type="evidence" value="ECO:0000314"/>
    <property type="project" value="RGD"/>
</dbReference>
<dbReference type="GO" id="GO:0032590">
    <property type="term" value="C:dendrite membrane"/>
    <property type="evidence" value="ECO:0000314"/>
    <property type="project" value="RGD"/>
</dbReference>
<dbReference type="GO" id="GO:0032591">
    <property type="term" value="C:dendritic spine membrane"/>
    <property type="evidence" value="ECO:0000314"/>
    <property type="project" value="RGD"/>
</dbReference>
<dbReference type="GO" id="GO:0098982">
    <property type="term" value="C:GABA-ergic synapse"/>
    <property type="evidence" value="ECO:0000314"/>
    <property type="project" value="SynGO"/>
</dbReference>
<dbReference type="GO" id="GO:0098978">
    <property type="term" value="C:glutamatergic synapse"/>
    <property type="evidence" value="ECO:0000314"/>
    <property type="project" value="SynGO"/>
</dbReference>
<dbReference type="GO" id="GO:0001772">
    <property type="term" value="C:immunological synapse"/>
    <property type="evidence" value="ECO:0000250"/>
    <property type="project" value="UniProtKB"/>
</dbReference>
<dbReference type="GO" id="GO:0043231">
    <property type="term" value="C:intracellular membrane-bounded organelle"/>
    <property type="evidence" value="ECO:0000318"/>
    <property type="project" value="GO_Central"/>
</dbReference>
<dbReference type="GO" id="GO:0032809">
    <property type="term" value="C:neuronal cell body membrane"/>
    <property type="evidence" value="ECO:0000314"/>
    <property type="project" value="RGD"/>
</dbReference>
<dbReference type="GO" id="GO:0098684">
    <property type="term" value="C:photoreceptor ribbon synapse"/>
    <property type="evidence" value="ECO:0000266"/>
    <property type="project" value="RGD"/>
</dbReference>
<dbReference type="GO" id="GO:0005886">
    <property type="term" value="C:plasma membrane"/>
    <property type="evidence" value="ECO:0000266"/>
    <property type="project" value="RGD"/>
</dbReference>
<dbReference type="GO" id="GO:0048787">
    <property type="term" value="C:presynaptic active zone membrane"/>
    <property type="evidence" value="ECO:0000314"/>
    <property type="project" value="SynGO"/>
</dbReference>
<dbReference type="GO" id="GO:0042734">
    <property type="term" value="C:presynaptic membrane"/>
    <property type="evidence" value="ECO:0000250"/>
    <property type="project" value="UniProtKB"/>
</dbReference>
<dbReference type="GO" id="GO:0030672">
    <property type="term" value="C:synaptic vesicle membrane"/>
    <property type="evidence" value="ECO:0000250"/>
    <property type="project" value="UniProtKB"/>
</dbReference>
<dbReference type="GO" id="GO:0005524">
    <property type="term" value="F:ATP binding"/>
    <property type="evidence" value="ECO:0007669"/>
    <property type="project" value="UniProtKB-KW"/>
</dbReference>
<dbReference type="GO" id="GO:0016887">
    <property type="term" value="F:ATP hydrolysis activity"/>
    <property type="evidence" value="ECO:0000250"/>
    <property type="project" value="UniProtKB"/>
</dbReference>
<dbReference type="GO" id="GO:0015085">
    <property type="term" value="F:calcium ion transmembrane transporter activity"/>
    <property type="evidence" value="ECO:0000266"/>
    <property type="project" value="RGD"/>
</dbReference>
<dbReference type="GO" id="GO:0005516">
    <property type="term" value="F:calmodulin binding"/>
    <property type="evidence" value="ECO:0007669"/>
    <property type="project" value="UniProtKB-KW"/>
</dbReference>
<dbReference type="GO" id="GO:0046872">
    <property type="term" value="F:metal ion binding"/>
    <property type="evidence" value="ECO:0007669"/>
    <property type="project" value="UniProtKB-KW"/>
</dbReference>
<dbReference type="GO" id="GO:0005388">
    <property type="term" value="F:P-type calcium transporter activity"/>
    <property type="evidence" value="ECO:0000318"/>
    <property type="project" value="GO_Central"/>
</dbReference>
<dbReference type="GO" id="GO:0030165">
    <property type="term" value="F:PDZ domain binding"/>
    <property type="evidence" value="ECO:0000353"/>
    <property type="project" value="RGD"/>
</dbReference>
<dbReference type="GO" id="GO:1901660">
    <property type="term" value="P:calcium ion export"/>
    <property type="evidence" value="ECO:0000315"/>
    <property type="project" value="RGD"/>
</dbReference>
<dbReference type="GO" id="GO:1990034">
    <property type="term" value="P:calcium ion export across plasma membrane"/>
    <property type="evidence" value="ECO:0000266"/>
    <property type="project" value="RGD"/>
</dbReference>
<dbReference type="GO" id="GO:0071386">
    <property type="term" value="P:cellular response to corticosterone stimulus"/>
    <property type="evidence" value="ECO:0000270"/>
    <property type="project" value="RGD"/>
</dbReference>
<dbReference type="GO" id="GO:0071305">
    <property type="term" value="P:cellular response to vitamin D"/>
    <property type="evidence" value="ECO:0000270"/>
    <property type="project" value="RGD"/>
</dbReference>
<dbReference type="GO" id="GO:0006874">
    <property type="term" value="P:intracellular calcium ion homeostasis"/>
    <property type="evidence" value="ECO:0000250"/>
    <property type="project" value="UniProtKB"/>
</dbReference>
<dbReference type="GO" id="GO:0001818">
    <property type="term" value="P:negative regulation of cytokine production"/>
    <property type="evidence" value="ECO:0000250"/>
    <property type="project" value="UniProtKB"/>
</dbReference>
<dbReference type="GO" id="GO:0051481">
    <property type="term" value="P:negative regulation of cytosolic calcium ion concentration"/>
    <property type="evidence" value="ECO:0000250"/>
    <property type="project" value="UniProtKB"/>
</dbReference>
<dbReference type="GO" id="GO:0003407">
    <property type="term" value="P:neural retina development"/>
    <property type="evidence" value="ECO:0000270"/>
    <property type="project" value="RGD"/>
</dbReference>
<dbReference type="GO" id="GO:0030501">
    <property type="term" value="P:positive regulation of bone mineralization"/>
    <property type="evidence" value="ECO:0000250"/>
    <property type="project" value="UniProtKB"/>
</dbReference>
<dbReference type="GO" id="GO:0051928">
    <property type="term" value="P:positive regulation of calcium ion transport"/>
    <property type="evidence" value="ECO:0000250"/>
    <property type="project" value="UniProtKB"/>
</dbReference>
<dbReference type="GO" id="GO:0008217">
    <property type="term" value="P:regulation of blood pressure"/>
    <property type="evidence" value="ECO:0000250"/>
    <property type="project" value="UniProtKB"/>
</dbReference>
<dbReference type="GO" id="GO:1900076">
    <property type="term" value="P:regulation of cellular response to insulin stimulus"/>
    <property type="evidence" value="ECO:0000250"/>
    <property type="project" value="UniProtKB"/>
</dbReference>
<dbReference type="GO" id="GO:0051480">
    <property type="term" value="P:regulation of cytosolic calcium ion concentration"/>
    <property type="evidence" value="ECO:0000250"/>
    <property type="project" value="UniProtKB"/>
</dbReference>
<dbReference type="GO" id="GO:0003056">
    <property type="term" value="P:regulation of vascular associated smooth muscle contraction"/>
    <property type="evidence" value="ECO:0000250"/>
    <property type="project" value="UniProtKB"/>
</dbReference>
<dbReference type="CDD" id="cd02081">
    <property type="entry name" value="P-type_ATPase_Ca_PMCA-like"/>
    <property type="match status" value="1"/>
</dbReference>
<dbReference type="FunFam" id="1.20.1110.10:FF:000001">
    <property type="entry name" value="Calcium-transporting ATPase"/>
    <property type="match status" value="1"/>
</dbReference>
<dbReference type="FunFam" id="1.20.1110.10:FF:000002">
    <property type="entry name" value="Calcium-transporting ATPase"/>
    <property type="match status" value="1"/>
</dbReference>
<dbReference type="FunFam" id="1.20.1110.10:FF:000008">
    <property type="entry name" value="Calcium-transporting ATPase"/>
    <property type="match status" value="1"/>
</dbReference>
<dbReference type="FunFam" id="2.70.150.10:FF:000001">
    <property type="entry name" value="Calcium-transporting ATPase"/>
    <property type="match status" value="1"/>
</dbReference>
<dbReference type="FunFam" id="3.40.1110.10:FF:000002">
    <property type="entry name" value="Calcium-transporting ATPase"/>
    <property type="match status" value="1"/>
</dbReference>
<dbReference type="FunFam" id="3.40.50.1000:FF:000007">
    <property type="entry name" value="Calcium-transporting ATPase"/>
    <property type="match status" value="1"/>
</dbReference>
<dbReference type="Gene3D" id="3.40.1110.10">
    <property type="entry name" value="Calcium-transporting ATPase, cytoplasmic domain N"/>
    <property type="match status" value="1"/>
</dbReference>
<dbReference type="Gene3D" id="2.70.150.10">
    <property type="entry name" value="Calcium-transporting ATPase, cytoplasmic transduction domain A"/>
    <property type="match status" value="1"/>
</dbReference>
<dbReference type="Gene3D" id="1.20.1110.10">
    <property type="entry name" value="Calcium-transporting ATPase, transmembrane domain"/>
    <property type="match status" value="3"/>
</dbReference>
<dbReference type="Gene3D" id="3.40.50.1000">
    <property type="entry name" value="HAD superfamily/HAD-like"/>
    <property type="match status" value="1"/>
</dbReference>
<dbReference type="InterPro" id="IPR022141">
    <property type="entry name" value="ATP_Ca_trans_C"/>
</dbReference>
<dbReference type="InterPro" id="IPR006068">
    <property type="entry name" value="ATPase_P-typ_cation-transptr_C"/>
</dbReference>
<dbReference type="InterPro" id="IPR004014">
    <property type="entry name" value="ATPase_P-typ_cation-transptr_N"/>
</dbReference>
<dbReference type="InterPro" id="IPR023299">
    <property type="entry name" value="ATPase_P-typ_cyto_dom_N"/>
</dbReference>
<dbReference type="InterPro" id="IPR018303">
    <property type="entry name" value="ATPase_P-typ_P_site"/>
</dbReference>
<dbReference type="InterPro" id="IPR023298">
    <property type="entry name" value="ATPase_P-typ_TM_dom_sf"/>
</dbReference>
<dbReference type="InterPro" id="IPR008250">
    <property type="entry name" value="ATPase_P-typ_transduc_dom_A_sf"/>
</dbReference>
<dbReference type="InterPro" id="IPR036412">
    <property type="entry name" value="HAD-like_sf"/>
</dbReference>
<dbReference type="InterPro" id="IPR023214">
    <property type="entry name" value="HAD_sf"/>
</dbReference>
<dbReference type="InterPro" id="IPR006408">
    <property type="entry name" value="P-type_ATPase_IIB"/>
</dbReference>
<dbReference type="InterPro" id="IPR001757">
    <property type="entry name" value="P_typ_ATPase"/>
</dbReference>
<dbReference type="InterPro" id="IPR044492">
    <property type="entry name" value="P_typ_ATPase_HD_dom"/>
</dbReference>
<dbReference type="NCBIfam" id="TIGR01517">
    <property type="entry name" value="ATPase-IIB_Ca"/>
    <property type="match status" value="1"/>
</dbReference>
<dbReference type="NCBIfam" id="TIGR01494">
    <property type="entry name" value="ATPase_P-type"/>
    <property type="match status" value="3"/>
</dbReference>
<dbReference type="PANTHER" id="PTHR24093">
    <property type="entry name" value="CATION TRANSPORTING ATPASE"/>
    <property type="match status" value="1"/>
</dbReference>
<dbReference type="PANTHER" id="PTHR24093:SF245">
    <property type="entry name" value="PLASMA MEMBRANE CALCIUM-TRANSPORTING ATPASE 1"/>
    <property type="match status" value="1"/>
</dbReference>
<dbReference type="Pfam" id="PF12424">
    <property type="entry name" value="ATP_Ca_trans_C"/>
    <property type="match status" value="1"/>
</dbReference>
<dbReference type="Pfam" id="PF13246">
    <property type="entry name" value="Cation_ATPase"/>
    <property type="match status" value="1"/>
</dbReference>
<dbReference type="Pfam" id="PF00689">
    <property type="entry name" value="Cation_ATPase_C"/>
    <property type="match status" value="1"/>
</dbReference>
<dbReference type="Pfam" id="PF00690">
    <property type="entry name" value="Cation_ATPase_N"/>
    <property type="match status" value="1"/>
</dbReference>
<dbReference type="Pfam" id="PF00122">
    <property type="entry name" value="E1-E2_ATPase"/>
    <property type="match status" value="2"/>
</dbReference>
<dbReference type="Pfam" id="PF00702">
    <property type="entry name" value="Hydrolase"/>
    <property type="match status" value="1"/>
</dbReference>
<dbReference type="PRINTS" id="PR00119">
    <property type="entry name" value="CATATPASE"/>
</dbReference>
<dbReference type="SFLD" id="SFLDS00003">
    <property type="entry name" value="Haloacid_Dehalogenase"/>
    <property type="match status" value="1"/>
</dbReference>
<dbReference type="SFLD" id="SFLDF00027">
    <property type="entry name" value="p-type_atpase"/>
    <property type="match status" value="1"/>
</dbReference>
<dbReference type="SMART" id="SM00831">
    <property type="entry name" value="Cation_ATPase_N"/>
    <property type="match status" value="1"/>
</dbReference>
<dbReference type="SUPFAM" id="SSF81653">
    <property type="entry name" value="Calcium ATPase, transduction domain A"/>
    <property type="match status" value="1"/>
</dbReference>
<dbReference type="SUPFAM" id="SSF81665">
    <property type="entry name" value="Calcium ATPase, transmembrane domain M"/>
    <property type="match status" value="1"/>
</dbReference>
<dbReference type="SUPFAM" id="SSF56784">
    <property type="entry name" value="HAD-like"/>
    <property type="match status" value="1"/>
</dbReference>
<dbReference type="SUPFAM" id="SSF81660">
    <property type="entry name" value="Metal cation-transporting ATPase, ATP-binding domain N"/>
    <property type="match status" value="1"/>
</dbReference>
<dbReference type="PROSITE" id="PS00154">
    <property type="entry name" value="ATPASE_E1_E2"/>
    <property type="match status" value="1"/>
</dbReference>
<gene>
    <name evidence="10" type="primary">Atp2b1</name>
</gene>